<dbReference type="EMBL" id="CP001063">
    <property type="protein sequence ID" value="ACD09206.1"/>
    <property type="molecule type" value="Genomic_DNA"/>
</dbReference>
<dbReference type="RefSeq" id="WP_000462905.1">
    <property type="nucleotide sequence ID" value="NC_010658.1"/>
</dbReference>
<dbReference type="SMR" id="B2U2N7"/>
<dbReference type="STRING" id="344609.SbBS512_E3644"/>
<dbReference type="GeneID" id="98390389"/>
<dbReference type="KEGG" id="sbc:SbBS512_E3644"/>
<dbReference type="HOGENOM" id="CLU_158040_3_0_6"/>
<dbReference type="Proteomes" id="UP000001030">
    <property type="component" value="Chromosome"/>
</dbReference>
<dbReference type="GO" id="GO:0003700">
    <property type="term" value="F:DNA-binding transcription factor activity"/>
    <property type="evidence" value="ECO:0007669"/>
    <property type="project" value="UniProtKB-UniRule"/>
</dbReference>
<dbReference type="GO" id="GO:0043565">
    <property type="term" value="F:sequence-specific DNA binding"/>
    <property type="evidence" value="ECO:0007669"/>
    <property type="project" value="InterPro"/>
</dbReference>
<dbReference type="FunFam" id="1.10.10.60:FF:000006">
    <property type="entry name" value="DNA-binding protein Fis"/>
    <property type="match status" value="1"/>
</dbReference>
<dbReference type="Gene3D" id="1.10.10.60">
    <property type="entry name" value="Homeodomain-like"/>
    <property type="match status" value="1"/>
</dbReference>
<dbReference type="HAMAP" id="MF_00166">
    <property type="entry name" value="DNA_binding_Fis"/>
    <property type="match status" value="1"/>
</dbReference>
<dbReference type="InterPro" id="IPR005412">
    <property type="entry name" value="Fis_DNA-bd"/>
</dbReference>
<dbReference type="InterPro" id="IPR009057">
    <property type="entry name" value="Homeodomain-like_sf"/>
</dbReference>
<dbReference type="InterPro" id="IPR002197">
    <property type="entry name" value="HTH_Fis"/>
</dbReference>
<dbReference type="InterPro" id="IPR050207">
    <property type="entry name" value="Trans_regulatory_Fis"/>
</dbReference>
<dbReference type="NCBIfam" id="NF001659">
    <property type="entry name" value="PRK00430.1"/>
    <property type="match status" value="1"/>
</dbReference>
<dbReference type="PANTHER" id="PTHR47918">
    <property type="entry name" value="DNA-BINDING PROTEIN FIS"/>
    <property type="match status" value="1"/>
</dbReference>
<dbReference type="PANTHER" id="PTHR47918:SF1">
    <property type="entry name" value="DNA-BINDING PROTEIN FIS"/>
    <property type="match status" value="1"/>
</dbReference>
<dbReference type="Pfam" id="PF02954">
    <property type="entry name" value="HTH_8"/>
    <property type="match status" value="1"/>
</dbReference>
<dbReference type="PIRSF" id="PIRSF002097">
    <property type="entry name" value="DNA-binding_Fis"/>
    <property type="match status" value="1"/>
</dbReference>
<dbReference type="PRINTS" id="PR01591">
    <property type="entry name" value="DNABINDNGFIS"/>
</dbReference>
<dbReference type="PRINTS" id="PR01590">
    <property type="entry name" value="HTHFIS"/>
</dbReference>
<dbReference type="SUPFAM" id="SSF46689">
    <property type="entry name" value="Homeodomain-like"/>
    <property type="match status" value="1"/>
</dbReference>
<evidence type="ECO:0000255" key="1">
    <source>
        <dbReference type="HAMAP-Rule" id="MF_00166"/>
    </source>
</evidence>
<feature type="chain" id="PRO_1000097466" description="DNA-binding protein Fis">
    <location>
        <begin position="1"/>
        <end position="98"/>
    </location>
</feature>
<feature type="DNA-binding region" description="H-T-H motif" evidence="1">
    <location>
        <begin position="74"/>
        <end position="93"/>
    </location>
</feature>
<gene>
    <name evidence="1" type="primary">fis</name>
    <name type="ordered locus">SbBS512_E3644</name>
</gene>
<reference key="1">
    <citation type="submission" date="2008-05" db="EMBL/GenBank/DDBJ databases">
        <title>Complete sequence of Shigella boydii serotype 18 strain BS512.</title>
        <authorList>
            <person name="Rasko D.A."/>
            <person name="Rosovitz M."/>
            <person name="Maurelli A.T."/>
            <person name="Myers G."/>
            <person name="Seshadri R."/>
            <person name="Cer R."/>
            <person name="Jiang L."/>
            <person name="Ravel J."/>
            <person name="Sebastian Y."/>
        </authorList>
    </citation>
    <scope>NUCLEOTIDE SEQUENCE [LARGE SCALE GENOMIC DNA]</scope>
    <source>
        <strain>CDC 3083-94 / BS512</strain>
    </source>
</reference>
<comment type="function">
    <text evidence="1">Activates ribosomal RNA transcription. Plays a direct role in upstream activation of rRNA promoters.</text>
</comment>
<comment type="subunit">
    <text evidence="1">Homodimer.</text>
</comment>
<comment type="similarity">
    <text evidence="1">Belongs to the transcriptional regulatory Fis family.</text>
</comment>
<sequence>MFEQRVNSDVLTVSTVNSQDQVTQKPLRDSVKQALKNYFAQLNGQDVNDLYELVLAEVEQPLLDMVMQYTRGNQTRAALMMGINRGTLRKKLKKYGMN</sequence>
<protein>
    <recommendedName>
        <fullName evidence="1">DNA-binding protein Fis</fullName>
    </recommendedName>
</protein>
<organism>
    <name type="scientific">Shigella boydii serotype 18 (strain CDC 3083-94 / BS512)</name>
    <dbReference type="NCBI Taxonomy" id="344609"/>
    <lineage>
        <taxon>Bacteria</taxon>
        <taxon>Pseudomonadati</taxon>
        <taxon>Pseudomonadota</taxon>
        <taxon>Gammaproteobacteria</taxon>
        <taxon>Enterobacterales</taxon>
        <taxon>Enterobacteriaceae</taxon>
        <taxon>Shigella</taxon>
    </lineage>
</organism>
<accession>B2U2N7</accession>
<keyword id="KW-0010">Activator</keyword>
<keyword id="KW-0238">DNA-binding</keyword>
<keyword id="KW-1185">Reference proteome</keyword>
<keyword id="KW-0804">Transcription</keyword>
<keyword id="KW-0805">Transcription regulation</keyword>
<proteinExistence type="inferred from homology"/>
<name>FIS_SHIB3</name>